<accession>B7K3S3</accession>
<proteinExistence type="inferred from homology"/>
<dbReference type="EMBL" id="CP001287">
    <property type="protein sequence ID" value="ACK66463.1"/>
    <property type="molecule type" value="Genomic_DNA"/>
</dbReference>
<dbReference type="RefSeq" id="WP_012595730.1">
    <property type="nucleotide sequence ID" value="NC_011726.1"/>
</dbReference>
<dbReference type="STRING" id="41431.PCC8801_2453"/>
<dbReference type="KEGG" id="cyp:PCC8801_2453"/>
<dbReference type="eggNOG" id="COG1971">
    <property type="taxonomic scope" value="Bacteria"/>
</dbReference>
<dbReference type="HOGENOM" id="CLU_096410_3_0_3"/>
<dbReference type="OrthoDB" id="9811590at2"/>
<dbReference type="Proteomes" id="UP000008204">
    <property type="component" value="Chromosome"/>
</dbReference>
<dbReference type="GO" id="GO:0005886">
    <property type="term" value="C:plasma membrane"/>
    <property type="evidence" value="ECO:0007669"/>
    <property type="project" value="UniProtKB-SubCell"/>
</dbReference>
<dbReference type="GO" id="GO:0005384">
    <property type="term" value="F:manganese ion transmembrane transporter activity"/>
    <property type="evidence" value="ECO:0007669"/>
    <property type="project" value="UniProtKB-UniRule"/>
</dbReference>
<dbReference type="HAMAP" id="MF_01521">
    <property type="entry name" value="MntP_pump"/>
    <property type="match status" value="1"/>
</dbReference>
<dbReference type="InterPro" id="IPR003810">
    <property type="entry name" value="Mntp/YtaF"/>
</dbReference>
<dbReference type="InterPro" id="IPR022929">
    <property type="entry name" value="Put_MntP"/>
</dbReference>
<dbReference type="PANTHER" id="PTHR35529">
    <property type="entry name" value="MANGANESE EFFLUX PUMP MNTP-RELATED"/>
    <property type="match status" value="1"/>
</dbReference>
<dbReference type="PANTHER" id="PTHR35529:SF1">
    <property type="entry name" value="MANGANESE EFFLUX PUMP MNTP-RELATED"/>
    <property type="match status" value="1"/>
</dbReference>
<dbReference type="Pfam" id="PF02659">
    <property type="entry name" value="Mntp"/>
    <property type="match status" value="1"/>
</dbReference>
<organism>
    <name type="scientific">Rippkaea orientalis (strain PCC 8801 / RF-1)</name>
    <name type="common">Cyanothece sp. (strain PCC 8801)</name>
    <dbReference type="NCBI Taxonomy" id="41431"/>
    <lineage>
        <taxon>Bacteria</taxon>
        <taxon>Bacillati</taxon>
        <taxon>Cyanobacteriota</taxon>
        <taxon>Cyanophyceae</taxon>
        <taxon>Oscillatoriophycideae</taxon>
        <taxon>Chroococcales</taxon>
        <taxon>Aphanothecaceae</taxon>
        <taxon>Rippkaea</taxon>
        <taxon>Rippkaea orientalis</taxon>
    </lineage>
</organism>
<keyword id="KW-0997">Cell inner membrane</keyword>
<keyword id="KW-1003">Cell membrane</keyword>
<keyword id="KW-0406">Ion transport</keyword>
<keyword id="KW-0464">Manganese</keyword>
<keyword id="KW-0472">Membrane</keyword>
<keyword id="KW-1185">Reference proteome</keyword>
<keyword id="KW-0812">Transmembrane</keyword>
<keyword id="KW-1133">Transmembrane helix</keyword>
<keyword id="KW-0813">Transport</keyword>
<evidence type="ECO:0000255" key="1">
    <source>
        <dbReference type="HAMAP-Rule" id="MF_01521"/>
    </source>
</evidence>
<feature type="chain" id="PRO_1000200018" description="Putative manganese efflux pump MntP">
    <location>
        <begin position="1"/>
        <end position="187"/>
    </location>
</feature>
<feature type="transmembrane region" description="Helical" evidence="1">
    <location>
        <begin position="8"/>
        <end position="28"/>
    </location>
</feature>
<feature type="transmembrane region" description="Helical" evidence="1">
    <location>
        <begin position="39"/>
        <end position="59"/>
    </location>
</feature>
<feature type="transmembrane region" description="Helical" evidence="1">
    <location>
        <begin position="65"/>
        <end position="85"/>
    </location>
</feature>
<feature type="transmembrane region" description="Helical" evidence="1">
    <location>
        <begin position="106"/>
        <end position="126"/>
    </location>
</feature>
<feature type="transmembrane region" description="Helical" evidence="1">
    <location>
        <begin position="131"/>
        <end position="151"/>
    </location>
</feature>
<feature type="transmembrane region" description="Helical" evidence="1">
    <location>
        <begin position="166"/>
        <end position="186"/>
    </location>
</feature>
<comment type="function">
    <text evidence="1">Probably functions as a manganese efflux pump.</text>
</comment>
<comment type="subcellular location">
    <subcellularLocation>
        <location evidence="1">Cell inner membrane</location>
        <topology evidence="1">Multi-pass membrane protein</topology>
    </subcellularLocation>
</comment>
<comment type="similarity">
    <text evidence="1">Belongs to the MntP (TC 9.B.29) family.</text>
</comment>
<name>MNTP_RIPO1</name>
<sequence length="187" mass="20197">MDLLNTTFLSIGLAIDAFAVSLSSGFIIKHIKFNKALKIALFFGIFQGVMPLIGWLTGLTFRDALANFDHWIAFILLAAIGGKMIYEACQDEEENKKFNPLDNYTLFALAIATSIDALAAGLGLSVLRVSILLACTLIASITFSLSFIGVFIGHKFGSIFNQKLEILGGITLIGIGTKILVEGLIIH</sequence>
<reference key="1">
    <citation type="journal article" date="2011" name="MBio">
        <title>Novel metabolic attributes of the genus Cyanothece, comprising a group of unicellular nitrogen-fixing Cyanobacteria.</title>
        <authorList>
            <person name="Bandyopadhyay A."/>
            <person name="Elvitigala T."/>
            <person name="Welsh E."/>
            <person name="Stockel J."/>
            <person name="Liberton M."/>
            <person name="Min H."/>
            <person name="Sherman L.A."/>
            <person name="Pakrasi H.B."/>
        </authorList>
    </citation>
    <scope>NUCLEOTIDE SEQUENCE [LARGE SCALE GENOMIC DNA]</scope>
    <source>
        <strain>PCC 8801 / RF-1</strain>
    </source>
</reference>
<protein>
    <recommendedName>
        <fullName evidence="1">Putative manganese efflux pump MntP</fullName>
    </recommendedName>
</protein>
<gene>
    <name evidence="1" type="primary">mntP</name>
    <name type="ordered locus">PCC8801_2453</name>
</gene>